<keyword id="KW-0067">ATP-binding</keyword>
<keyword id="KW-0414">Isoprene biosynthesis</keyword>
<keyword id="KW-0418">Kinase</keyword>
<keyword id="KW-0547">Nucleotide-binding</keyword>
<keyword id="KW-0808">Transferase</keyword>
<name>ISPE_HELPJ</name>
<feature type="chain" id="PRO_0000189225" description="4-diphosphocytidyl-2-C-methyl-D-erythritol kinase">
    <location>
        <begin position="1"/>
        <end position="274"/>
    </location>
</feature>
<feature type="active site" evidence="1">
    <location>
        <position position="10"/>
    </location>
</feature>
<feature type="active site" evidence="1">
    <location>
        <position position="143"/>
    </location>
</feature>
<feature type="binding site" evidence="1">
    <location>
        <begin position="101"/>
        <end position="111"/>
    </location>
    <ligand>
        <name>ATP</name>
        <dbReference type="ChEBI" id="CHEBI:30616"/>
    </ligand>
</feature>
<comment type="function">
    <text evidence="1">Catalyzes the phosphorylation of the position 2 hydroxy group of 4-diphosphocytidyl-2C-methyl-D-erythritol.</text>
</comment>
<comment type="catalytic activity">
    <reaction evidence="1">
        <text>4-CDP-2-C-methyl-D-erythritol + ATP = 4-CDP-2-C-methyl-D-erythritol 2-phosphate + ADP + H(+)</text>
        <dbReference type="Rhea" id="RHEA:18437"/>
        <dbReference type="ChEBI" id="CHEBI:15378"/>
        <dbReference type="ChEBI" id="CHEBI:30616"/>
        <dbReference type="ChEBI" id="CHEBI:57823"/>
        <dbReference type="ChEBI" id="CHEBI:57919"/>
        <dbReference type="ChEBI" id="CHEBI:456216"/>
        <dbReference type="EC" id="2.7.1.148"/>
    </reaction>
</comment>
<comment type="pathway">
    <text evidence="1">Isoprenoid biosynthesis; isopentenyl diphosphate biosynthesis via DXP pathway; isopentenyl diphosphate from 1-deoxy-D-xylulose 5-phosphate: step 3/6.</text>
</comment>
<comment type="similarity">
    <text evidence="1">Belongs to the GHMP kinase family. IspE subfamily.</text>
</comment>
<gene>
    <name evidence="1" type="primary">ispE</name>
    <name type="ordered locus">jhp_1336</name>
</gene>
<organism>
    <name type="scientific">Helicobacter pylori (strain J99 / ATCC 700824)</name>
    <name type="common">Campylobacter pylori J99</name>
    <dbReference type="NCBI Taxonomy" id="85963"/>
    <lineage>
        <taxon>Bacteria</taxon>
        <taxon>Pseudomonadati</taxon>
        <taxon>Campylobacterota</taxon>
        <taxon>Epsilonproteobacteria</taxon>
        <taxon>Campylobacterales</taxon>
        <taxon>Helicobacteraceae</taxon>
        <taxon>Helicobacter</taxon>
    </lineage>
</organism>
<dbReference type="EC" id="2.7.1.148" evidence="1"/>
<dbReference type="EMBL" id="AE001439">
    <property type="protein sequence ID" value="AAD06912.1"/>
    <property type="molecule type" value="Genomic_DNA"/>
</dbReference>
<dbReference type="PIR" id="F71820">
    <property type="entry name" value="F71820"/>
</dbReference>
<dbReference type="RefSeq" id="WP_000150065.1">
    <property type="nucleotide sequence ID" value="NC_000921.1"/>
</dbReference>
<dbReference type="SMR" id="Q9ZJH3"/>
<dbReference type="KEGG" id="hpj:jhp_1336"/>
<dbReference type="PATRIC" id="fig|85963.30.peg.1217"/>
<dbReference type="eggNOG" id="COG1947">
    <property type="taxonomic scope" value="Bacteria"/>
</dbReference>
<dbReference type="UniPathway" id="UPA00056">
    <property type="reaction ID" value="UER00094"/>
</dbReference>
<dbReference type="Proteomes" id="UP000000804">
    <property type="component" value="Chromosome"/>
</dbReference>
<dbReference type="GO" id="GO:0050515">
    <property type="term" value="F:4-(cytidine 5'-diphospho)-2-C-methyl-D-erythritol kinase activity"/>
    <property type="evidence" value="ECO:0007669"/>
    <property type="project" value="UniProtKB-UniRule"/>
</dbReference>
<dbReference type="GO" id="GO:0005524">
    <property type="term" value="F:ATP binding"/>
    <property type="evidence" value="ECO:0007669"/>
    <property type="project" value="UniProtKB-UniRule"/>
</dbReference>
<dbReference type="GO" id="GO:0019288">
    <property type="term" value="P:isopentenyl diphosphate biosynthetic process, methylerythritol 4-phosphate pathway"/>
    <property type="evidence" value="ECO:0007669"/>
    <property type="project" value="UniProtKB-UniRule"/>
</dbReference>
<dbReference type="GO" id="GO:0016114">
    <property type="term" value="P:terpenoid biosynthetic process"/>
    <property type="evidence" value="ECO:0007669"/>
    <property type="project" value="InterPro"/>
</dbReference>
<dbReference type="Gene3D" id="3.30.230.10">
    <property type="match status" value="1"/>
</dbReference>
<dbReference type="Gene3D" id="3.30.70.890">
    <property type="entry name" value="GHMP kinase, C-terminal domain"/>
    <property type="match status" value="1"/>
</dbReference>
<dbReference type="HAMAP" id="MF_00061">
    <property type="entry name" value="IspE"/>
    <property type="match status" value="1"/>
</dbReference>
<dbReference type="InterPro" id="IPR036554">
    <property type="entry name" value="GHMP_kinase_C_sf"/>
</dbReference>
<dbReference type="InterPro" id="IPR006204">
    <property type="entry name" value="GHMP_kinase_N_dom"/>
</dbReference>
<dbReference type="InterPro" id="IPR004424">
    <property type="entry name" value="IspE"/>
</dbReference>
<dbReference type="InterPro" id="IPR020568">
    <property type="entry name" value="Ribosomal_Su5_D2-typ_SF"/>
</dbReference>
<dbReference type="InterPro" id="IPR014721">
    <property type="entry name" value="Ribsml_uS5_D2-typ_fold_subgr"/>
</dbReference>
<dbReference type="NCBIfam" id="TIGR00154">
    <property type="entry name" value="ispE"/>
    <property type="match status" value="1"/>
</dbReference>
<dbReference type="NCBIfam" id="NF003216">
    <property type="entry name" value="PRK04181.1"/>
    <property type="match status" value="1"/>
</dbReference>
<dbReference type="PANTHER" id="PTHR43527">
    <property type="entry name" value="4-DIPHOSPHOCYTIDYL-2-C-METHYL-D-ERYTHRITOL KINASE, CHLOROPLASTIC"/>
    <property type="match status" value="1"/>
</dbReference>
<dbReference type="PANTHER" id="PTHR43527:SF2">
    <property type="entry name" value="4-DIPHOSPHOCYTIDYL-2-C-METHYL-D-ERYTHRITOL KINASE, CHLOROPLASTIC"/>
    <property type="match status" value="1"/>
</dbReference>
<dbReference type="Pfam" id="PF00288">
    <property type="entry name" value="GHMP_kinases_N"/>
    <property type="match status" value="1"/>
</dbReference>
<dbReference type="PIRSF" id="PIRSF010376">
    <property type="entry name" value="IspE"/>
    <property type="match status" value="1"/>
</dbReference>
<dbReference type="SUPFAM" id="SSF55060">
    <property type="entry name" value="GHMP Kinase, C-terminal domain"/>
    <property type="match status" value="1"/>
</dbReference>
<dbReference type="SUPFAM" id="SSF54211">
    <property type="entry name" value="Ribosomal protein S5 domain 2-like"/>
    <property type="match status" value="1"/>
</dbReference>
<evidence type="ECO:0000255" key="1">
    <source>
        <dbReference type="HAMAP-Rule" id="MF_00061"/>
    </source>
</evidence>
<sequence length="274" mass="31168">MTHVFEVYPKVNVFLKILHKEGAYHKIISRMCLVKNKLKDIISVKNALSFSLKGDFDCPLEENSLFKALQVLKKFLVQKNFSHSVIKSLDTLAIEVEKNIPTQAGLGGGSADAGGLLYHLNQMFDWRLSLKELYTMGSLVGADTNFFISQYKSANATSYGEVIENFEEESLEDRLEIYAPNHVFCSTKAVYQAYKPETCFFQAKEWLKKTSLECLKTYDRNELNDLLKPALRTNPALKDIESQLSKEWFFSGSGSAFFRLKNTQKGANETHCQQ</sequence>
<protein>
    <recommendedName>
        <fullName evidence="1">4-diphosphocytidyl-2-C-methyl-D-erythritol kinase</fullName>
        <shortName evidence="1">CMK</shortName>
        <ecNumber evidence="1">2.7.1.148</ecNumber>
    </recommendedName>
    <alternativeName>
        <fullName evidence="1">4-(cytidine-5'-diphospho)-2-C-methyl-D-erythritol kinase</fullName>
    </alternativeName>
</protein>
<reference key="1">
    <citation type="journal article" date="1999" name="Nature">
        <title>Genomic sequence comparison of two unrelated isolates of the human gastric pathogen Helicobacter pylori.</title>
        <authorList>
            <person name="Alm R.A."/>
            <person name="Ling L.-S.L."/>
            <person name="Moir D.T."/>
            <person name="King B.L."/>
            <person name="Brown E.D."/>
            <person name="Doig P.C."/>
            <person name="Smith D.R."/>
            <person name="Noonan B."/>
            <person name="Guild B.C."/>
            <person name="deJonge B.L."/>
            <person name="Carmel G."/>
            <person name="Tummino P.J."/>
            <person name="Caruso A."/>
            <person name="Uria-Nickelsen M."/>
            <person name="Mills D.M."/>
            <person name="Ives C."/>
            <person name="Gibson R."/>
            <person name="Merberg D."/>
            <person name="Mills S.D."/>
            <person name="Jiang Q."/>
            <person name="Taylor D.E."/>
            <person name="Vovis G.F."/>
            <person name="Trust T.J."/>
        </authorList>
    </citation>
    <scope>NUCLEOTIDE SEQUENCE [LARGE SCALE GENOMIC DNA]</scope>
    <source>
        <strain>J99 / ATCC 700824</strain>
    </source>
</reference>
<accession>Q9ZJH3</accession>
<proteinExistence type="inferred from homology"/>